<feature type="chain" id="PRO_0000177642" description="Peptide chain release factor 1">
    <location>
        <begin position="1"/>
        <end position="360"/>
    </location>
</feature>
<feature type="modified residue" description="N5-methylglutamine" evidence="1">
    <location>
        <position position="235"/>
    </location>
</feature>
<protein>
    <recommendedName>
        <fullName evidence="1">Peptide chain release factor 1</fullName>
        <shortName evidence="1">RF-1</shortName>
    </recommendedName>
</protein>
<sequence length="360" mass="40130">MKPSMRSRLEQLAHRLIEVDALLAEPETAADMDRFRKLSRERAELEPVVEAFNAFLGVEADVATAQEMLSDPDMKAMAEDEIKTGRARIEEMEAALQLLLLPRDPDDGRSLFLEIRAGTGGDESALFSGDLLRMYTRYAETRGWRVEIMSESESELGGYKEVIARIDGDGAYGRLKFESGAHRVQRVPATEAQGRIHTSACTVAVMPEADAMSDIVINPSDLRIDTFRASGAGGQHINKTDSAVRITHVPTGLVVECQDDRSQHRNKDKAMQVLAARLKDKEMRERQSKEAAERKSLIGSGDRSERIRTYNYPQGRVTDHRINLTLYKLQQIMEGDLDELTGALLAEHQAEQLAALGHDL</sequence>
<gene>
    <name evidence="1" type="primary">prfA</name>
    <name type="ordered locus">BP0678</name>
</gene>
<name>RF1_BORPE</name>
<accession>Q7W023</accession>
<dbReference type="EMBL" id="BX640413">
    <property type="protein sequence ID" value="CAE40989.1"/>
    <property type="molecule type" value="Genomic_DNA"/>
</dbReference>
<dbReference type="RefSeq" id="NP_879515.1">
    <property type="nucleotide sequence ID" value="NC_002929.2"/>
</dbReference>
<dbReference type="RefSeq" id="WP_003807618.1">
    <property type="nucleotide sequence ID" value="NZ_CP039022.1"/>
</dbReference>
<dbReference type="SMR" id="Q7W023"/>
<dbReference type="STRING" id="257313.BP0678"/>
<dbReference type="PaxDb" id="257313-BP0678"/>
<dbReference type="GeneID" id="69603285"/>
<dbReference type="KEGG" id="bpe:BP0678"/>
<dbReference type="PATRIC" id="fig|257313.5.peg.727"/>
<dbReference type="eggNOG" id="COG0216">
    <property type="taxonomic scope" value="Bacteria"/>
</dbReference>
<dbReference type="HOGENOM" id="CLU_036856_0_1_4"/>
<dbReference type="Proteomes" id="UP000002676">
    <property type="component" value="Chromosome"/>
</dbReference>
<dbReference type="GO" id="GO:0005737">
    <property type="term" value="C:cytoplasm"/>
    <property type="evidence" value="ECO:0007669"/>
    <property type="project" value="UniProtKB-SubCell"/>
</dbReference>
<dbReference type="GO" id="GO:0016149">
    <property type="term" value="F:translation release factor activity, codon specific"/>
    <property type="evidence" value="ECO:0007669"/>
    <property type="project" value="UniProtKB-UniRule"/>
</dbReference>
<dbReference type="FunFam" id="3.30.160.20:FF:000004">
    <property type="entry name" value="Peptide chain release factor 1"/>
    <property type="match status" value="1"/>
</dbReference>
<dbReference type="FunFam" id="3.30.70.1660:FF:000002">
    <property type="entry name" value="Peptide chain release factor 1"/>
    <property type="match status" value="1"/>
</dbReference>
<dbReference type="FunFam" id="3.30.70.1660:FF:000004">
    <property type="entry name" value="Peptide chain release factor 1"/>
    <property type="match status" value="1"/>
</dbReference>
<dbReference type="Gene3D" id="3.30.160.20">
    <property type="match status" value="1"/>
</dbReference>
<dbReference type="Gene3D" id="3.30.70.1660">
    <property type="match status" value="2"/>
</dbReference>
<dbReference type="Gene3D" id="6.10.140.1950">
    <property type="match status" value="1"/>
</dbReference>
<dbReference type="HAMAP" id="MF_00093">
    <property type="entry name" value="Rel_fac_1"/>
    <property type="match status" value="1"/>
</dbReference>
<dbReference type="InterPro" id="IPR005139">
    <property type="entry name" value="PCRF"/>
</dbReference>
<dbReference type="InterPro" id="IPR000352">
    <property type="entry name" value="Pep_chain_release_fac_I"/>
</dbReference>
<dbReference type="InterPro" id="IPR045853">
    <property type="entry name" value="Pep_chain_release_fac_I_sf"/>
</dbReference>
<dbReference type="InterPro" id="IPR050057">
    <property type="entry name" value="Prokaryotic/Mito_RF"/>
</dbReference>
<dbReference type="InterPro" id="IPR004373">
    <property type="entry name" value="RF-1"/>
</dbReference>
<dbReference type="NCBIfam" id="TIGR00019">
    <property type="entry name" value="prfA"/>
    <property type="match status" value="1"/>
</dbReference>
<dbReference type="NCBIfam" id="NF001859">
    <property type="entry name" value="PRK00591.1"/>
    <property type="match status" value="1"/>
</dbReference>
<dbReference type="PANTHER" id="PTHR43804">
    <property type="entry name" value="LD18447P"/>
    <property type="match status" value="1"/>
</dbReference>
<dbReference type="PANTHER" id="PTHR43804:SF7">
    <property type="entry name" value="LD18447P"/>
    <property type="match status" value="1"/>
</dbReference>
<dbReference type="Pfam" id="PF03462">
    <property type="entry name" value="PCRF"/>
    <property type="match status" value="1"/>
</dbReference>
<dbReference type="Pfam" id="PF00472">
    <property type="entry name" value="RF-1"/>
    <property type="match status" value="1"/>
</dbReference>
<dbReference type="SMART" id="SM00937">
    <property type="entry name" value="PCRF"/>
    <property type="match status" value="1"/>
</dbReference>
<dbReference type="SUPFAM" id="SSF75620">
    <property type="entry name" value="Release factor"/>
    <property type="match status" value="1"/>
</dbReference>
<dbReference type="PROSITE" id="PS00745">
    <property type="entry name" value="RF_PROK_I"/>
    <property type="match status" value="1"/>
</dbReference>
<comment type="function">
    <text evidence="1">Peptide chain release factor 1 directs the termination of translation in response to the peptide chain termination codons UAG and UAA.</text>
</comment>
<comment type="subcellular location">
    <subcellularLocation>
        <location evidence="1">Cytoplasm</location>
    </subcellularLocation>
</comment>
<comment type="PTM">
    <text evidence="1">Methylated by PrmC. Methylation increases the termination efficiency of RF1.</text>
</comment>
<comment type="similarity">
    <text evidence="1">Belongs to the prokaryotic/mitochondrial release factor family.</text>
</comment>
<reference key="1">
    <citation type="journal article" date="2003" name="Nat. Genet.">
        <title>Comparative analysis of the genome sequences of Bordetella pertussis, Bordetella parapertussis and Bordetella bronchiseptica.</title>
        <authorList>
            <person name="Parkhill J."/>
            <person name="Sebaihia M."/>
            <person name="Preston A."/>
            <person name="Murphy L.D."/>
            <person name="Thomson N.R."/>
            <person name="Harris D.E."/>
            <person name="Holden M.T.G."/>
            <person name="Churcher C.M."/>
            <person name="Bentley S.D."/>
            <person name="Mungall K.L."/>
            <person name="Cerdeno-Tarraga A.-M."/>
            <person name="Temple L."/>
            <person name="James K.D."/>
            <person name="Harris B."/>
            <person name="Quail M.A."/>
            <person name="Achtman M."/>
            <person name="Atkin R."/>
            <person name="Baker S."/>
            <person name="Basham D."/>
            <person name="Bason N."/>
            <person name="Cherevach I."/>
            <person name="Chillingworth T."/>
            <person name="Collins M."/>
            <person name="Cronin A."/>
            <person name="Davis P."/>
            <person name="Doggett J."/>
            <person name="Feltwell T."/>
            <person name="Goble A."/>
            <person name="Hamlin N."/>
            <person name="Hauser H."/>
            <person name="Holroyd S."/>
            <person name="Jagels K."/>
            <person name="Leather S."/>
            <person name="Moule S."/>
            <person name="Norberczak H."/>
            <person name="O'Neil S."/>
            <person name="Ormond D."/>
            <person name="Price C."/>
            <person name="Rabbinowitsch E."/>
            <person name="Rutter S."/>
            <person name="Sanders M."/>
            <person name="Saunders D."/>
            <person name="Seeger K."/>
            <person name="Sharp S."/>
            <person name="Simmonds M."/>
            <person name="Skelton J."/>
            <person name="Squares R."/>
            <person name="Squares S."/>
            <person name="Stevens K."/>
            <person name="Unwin L."/>
            <person name="Whitehead S."/>
            <person name="Barrell B.G."/>
            <person name="Maskell D.J."/>
        </authorList>
    </citation>
    <scope>NUCLEOTIDE SEQUENCE [LARGE SCALE GENOMIC DNA]</scope>
    <source>
        <strain>Tohama I / ATCC BAA-589 / NCTC 13251</strain>
    </source>
</reference>
<keyword id="KW-0963">Cytoplasm</keyword>
<keyword id="KW-0488">Methylation</keyword>
<keyword id="KW-0648">Protein biosynthesis</keyword>
<keyword id="KW-1185">Reference proteome</keyword>
<organism>
    <name type="scientific">Bordetella pertussis (strain Tohama I / ATCC BAA-589 / NCTC 13251)</name>
    <dbReference type="NCBI Taxonomy" id="257313"/>
    <lineage>
        <taxon>Bacteria</taxon>
        <taxon>Pseudomonadati</taxon>
        <taxon>Pseudomonadota</taxon>
        <taxon>Betaproteobacteria</taxon>
        <taxon>Burkholderiales</taxon>
        <taxon>Alcaligenaceae</taxon>
        <taxon>Bordetella</taxon>
    </lineage>
</organism>
<evidence type="ECO:0000255" key="1">
    <source>
        <dbReference type="HAMAP-Rule" id="MF_00093"/>
    </source>
</evidence>
<proteinExistence type="inferred from homology"/>